<feature type="chain" id="PRO_0000171399" description="tRNA (guanine-N(7)-)-methyltransferase">
    <location>
        <begin position="1"/>
        <end position="211"/>
    </location>
</feature>
<feature type="region of interest" description="Interaction with RNA" evidence="2">
    <location>
        <begin position="124"/>
        <end position="129"/>
    </location>
</feature>
<feature type="active site" evidence="1">
    <location>
        <position position="118"/>
    </location>
</feature>
<feature type="binding site" evidence="2">
    <location>
        <position position="44"/>
    </location>
    <ligand>
        <name>S-adenosyl-L-methionine</name>
        <dbReference type="ChEBI" id="CHEBI:59789"/>
    </ligand>
</feature>
<feature type="binding site" evidence="2">
    <location>
        <position position="69"/>
    </location>
    <ligand>
        <name>S-adenosyl-L-methionine</name>
        <dbReference type="ChEBI" id="CHEBI:59789"/>
    </ligand>
</feature>
<feature type="binding site" evidence="2">
    <location>
        <position position="96"/>
    </location>
    <ligand>
        <name>S-adenosyl-L-methionine</name>
        <dbReference type="ChEBI" id="CHEBI:59789"/>
    </ligand>
</feature>
<feature type="binding site" evidence="2">
    <location>
        <position position="118"/>
    </location>
    <ligand>
        <name>S-adenosyl-L-methionine</name>
        <dbReference type="ChEBI" id="CHEBI:59789"/>
    </ligand>
</feature>
<feature type="binding site" evidence="2">
    <location>
        <position position="122"/>
    </location>
    <ligand>
        <name>substrate</name>
    </ligand>
</feature>
<feature type="binding site" evidence="2">
    <location>
        <position position="154"/>
    </location>
    <ligand>
        <name>substrate</name>
    </ligand>
</feature>
<feature type="binding site" evidence="2">
    <location>
        <begin position="191"/>
        <end position="194"/>
    </location>
    <ligand>
        <name>substrate</name>
    </ligand>
</feature>
<organism>
    <name type="scientific">Streptococcus agalactiae serotype V (strain ATCC BAA-611 / 2603 V/R)</name>
    <dbReference type="NCBI Taxonomy" id="208435"/>
    <lineage>
        <taxon>Bacteria</taxon>
        <taxon>Bacillati</taxon>
        <taxon>Bacillota</taxon>
        <taxon>Bacilli</taxon>
        <taxon>Lactobacillales</taxon>
        <taxon>Streptococcaceae</taxon>
        <taxon>Streptococcus</taxon>
    </lineage>
</organism>
<gene>
    <name evidence="2" type="primary">trmB</name>
    <name type="ordered locus">SAG0376</name>
</gene>
<reference key="1">
    <citation type="journal article" date="2002" name="Proc. Natl. Acad. Sci. U.S.A.">
        <title>Complete genome sequence and comparative genomic analysis of an emerging human pathogen, serotype V Streptococcus agalactiae.</title>
        <authorList>
            <person name="Tettelin H."/>
            <person name="Masignani V."/>
            <person name="Cieslewicz M.J."/>
            <person name="Eisen J.A."/>
            <person name="Peterson S.N."/>
            <person name="Wessels M.R."/>
            <person name="Paulsen I.T."/>
            <person name="Nelson K.E."/>
            <person name="Margarit I."/>
            <person name="Read T.D."/>
            <person name="Madoff L.C."/>
            <person name="Wolf A.M."/>
            <person name="Beanan M.J."/>
            <person name="Brinkac L.M."/>
            <person name="Daugherty S.C."/>
            <person name="DeBoy R.T."/>
            <person name="Durkin A.S."/>
            <person name="Kolonay J.F."/>
            <person name="Madupu R."/>
            <person name="Lewis M.R."/>
            <person name="Radune D."/>
            <person name="Fedorova N.B."/>
            <person name="Scanlan D."/>
            <person name="Khouri H.M."/>
            <person name="Mulligan S."/>
            <person name="Carty H.A."/>
            <person name="Cline R.T."/>
            <person name="Van Aken S.E."/>
            <person name="Gill J."/>
            <person name="Scarselli M."/>
            <person name="Mora M."/>
            <person name="Iacobini E.T."/>
            <person name="Brettoni C."/>
            <person name="Galli G."/>
            <person name="Mariani M."/>
            <person name="Vegni F."/>
            <person name="Maione D."/>
            <person name="Rinaudo D."/>
            <person name="Rappuoli R."/>
            <person name="Telford J.L."/>
            <person name="Kasper D.L."/>
            <person name="Grandi G."/>
            <person name="Fraser C.M."/>
        </authorList>
    </citation>
    <scope>NUCLEOTIDE SEQUENCE [LARGE SCALE GENOMIC DNA]</scope>
    <source>
        <strain>ATCC BAA-611 / 2603 V/R</strain>
    </source>
</reference>
<evidence type="ECO:0000250" key="1"/>
<evidence type="ECO:0000255" key="2">
    <source>
        <dbReference type="HAMAP-Rule" id="MF_01057"/>
    </source>
</evidence>
<keyword id="KW-0489">Methyltransferase</keyword>
<keyword id="KW-1185">Reference proteome</keyword>
<keyword id="KW-0949">S-adenosyl-L-methionine</keyword>
<keyword id="KW-0808">Transferase</keyword>
<keyword id="KW-0819">tRNA processing</keyword>
<name>TRMB_STRA5</name>
<accession>P67503</accession>
<accession>Q8E1H8</accession>
<accession>Q8E6Z5</accession>
<sequence>MRVRKRKGAEEHLENNPHYVISNPEEAKGRWHEIFGNNNPIHIEVGSGKGAFITGMAEQNPDINYIGIDIQLSVLSYALDKVLDSGAKNIKLLLVDGSSLSNYFDTGEVDLMYLNFSDPWPKKKHEKRRLTYKTFLDTYKDILPEQGEIHFKTDNRGLFEYSLASFSQYGMTLKQVWLDLHASDYQQNIMTEYERKFSNKGQVIYRVEARF</sequence>
<dbReference type="EC" id="2.1.1.33" evidence="2"/>
<dbReference type="EMBL" id="AE009948">
    <property type="protein sequence ID" value="AAM99282.1"/>
    <property type="molecule type" value="Genomic_DNA"/>
</dbReference>
<dbReference type="RefSeq" id="NP_687410.1">
    <property type="nucleotide sequence ID" value="NC_004116.1"/>
</dbReference>
<dbReference type="RefSeq" id="WP_001266024.1">
    <property type="nucleotide sequence ID" value="NC_004116.1"/>
</dbReference>
<dbReference type="SMR" id="P67503"/>
<dbReference type="STRING" id="208435.SAG0376"/>
<dbReference type="GeneID" id="66885350"/>
<dbReference type="KEGG" id="sag:SAG0376"/>
<dbReference type="PATRIC" id="fig|208435.3.peg.371"/>
<dbReference type="HOGENOM" id="CLU_050910_2_1_9"/>
<dbReference type="OrthoDB" id="9802090at2"/>
<dbReference type="UniPathway" id="UPA00989"/>
<dbReference type="Proteomes" id="UP000000821">
    <property type="component" value="Chromosome"/>
</dbReference>
<dbReference type="GO" id="GO:0043527">
    <property type="term" value="C:tRNA methyltransferase complex"/>
    <property type="evidence" value="ECO:0007669"/>
    <property type="project" value="TreeGrafter"/>
</dbReference>
<dbReference type="GO" id="GO:0008176">
    <property type="term" value="F:tRNA (guanine(46)-N7)-methyltransferase activity"/>
    <property type="evidence" value="ECO:0007669"/>
    <property type="project" value="UniProtKB-UniRule"/>
</dbReference>
<dbReference type="CDD" id="cd02440">
    <property type="entry name" value="AdoMet_MTases"/>
    <property type="match status" value="1"/>
</dbReference>
<dbReference type="FunFam" id="3.40.50.150:FF:000035">
    <property type="entry name" value="tRNA (guanine-N(7)-)-methyltransferase"/>
    <property type="match status" value="1"/>
</dbReference>
<dbReference type="Gene3D" id="3.40.50.150">
    <property type="entry name" value="Vaccinia Virus protein VP39"/>
    <property type="match status" value="1"/>
</dbReference>
<dbReference type="HAMAP" id="MF_01057">
    <property type="entry name" value="tRNA_methyltr_TrmB"/>
    <property type="match status" value="1"/>
</dbReference>
<dbReference type="InterPro" id="IPR029063">
    <property type="entry name" value="SAM-dependent_MTases_sf"/>
</dbReference>
<dbReference type="InterPro" id="IPR003358">
    <property type="entry name" value="tRNA_(Gua-N-7)_MeTrfase_Trmb"/>
</dbReference>
<dbReference type="InterPro" id="IPR055361">
    <property type="entry name" value="tRNA_methyltr_TrmB_bact"/>
</dbReference>
<dbReference type="NCBIfam" id="NF001080">
    <property type="entry name" value="PRK00121.2-2"/>
    <property type="match status" value="1"/>
</dbReference>
<dbReference type="NCBIfam" id="TIGR00091">
    <property type="entry name" value="tRNA (guanosine(46)-N7)-methyltransferase TrmB"/>
    <property type="match status" value="1"/>
</dbReference>
<dbReference type="PANTHER" id="PTHR23417">
    <property type="entry name" value="3-DEOXY-D-MANNO-OCTULOSONIC-ACID TRANSFERASE/TRNA GUANINE-N 7 - -METHYLTRANSFERASE"/>
    <property type="match status" value="1"/>
</dbReference>
<dbReference type="PANTHER" id="PTHR23417:SF14">
    <property type="entry name" value="PENTACOTRIPEPTIDE-REPEAT REGION OF PRORP DOMAIN-CONTAINING PROTEIN"/>
    <property type="match status" value="1"/>
</dbReference>
<dbReference type="Pfam" id="PF02390">
    <property type="entry name" value="Methyltransf_4"/>
    <property type="match status" value="1"/>
</dbReference>
<dbReference type="SUPFAM" id="SSF53335">
    <property type="entry name" value="S-adenosyl-L-methionine-dependent methyltransferases"/>
    <property type="match status" value="1"/>
</dbReference>
<dbReference type="PROSITE" id="PS51625">
    <property type="entry name" value="SAM_MT_TRMB"/>
    <property type="match status" value="1"/>
</dbReference>
<proteinExistence type="inferred from homology"/>
<protein>
    <recommendedName>
        <fullName evidence="2">tRNA (guanine-N(7)-)-methyltransferase</fullName>
        <ecNumber evidence="2">2.1.1.33</ecNumber>
    </recommendedName>
    <alternativeName>
        <fullName evidence="2">tRNA (guanine(46)-N(7))-methyltransferase</fullName>
    </alternativeName>
    <alternativeName>
        <fullName evidence="2">tRNA(m7G46)-methyltransferase</fullName>
    </alternativeName>
</protein>
<comment type="function">
    <text evidence="2">Catalyzes the formation of N(7)-methylguanine at position 46 (m7G46) in tRNA.</text>
</comment>
<comment type="catalytic activity">
    <reaction evidence="2">
        <text>guanosine(46) in tRNA + S-adenosyl-L-methionine = N(7)-methylguanosine(46) in tRNA + S-adenosyl-L-homocysteine</text>
        <dbReference type="Rhea" id="RHEA:42708"/>
        <dbReference type="Rhea" id="RHEA-COMP:10188"/>
        <dbReference type="Rhea" id="RHEA-COMP:10189"/>
        <dbReference type="ChEBI" id="CHEBI:57856"/>
        <dbReference type="ChEBI" id="CHEBI:59789"/>
        <dbReference type="ChEBI" id="CHEBI:74269"/>
        <dbReference type="ChEBI" id="CHEBI:74480"/>
        <dbReference type="EC" id="2.1.1.33"/>
    </reaction>
</comment>
<comment type="pathway">
    <text evidence="2">tRNA modification; N(7)-methylguanine-tRNA biosynthesis.</text>
</comment>
<comment type="similarity">
    <text evidence="2">Belongs to the class I-like SAM-binding methyltransferase superfamily. TrmB family.</text>
</comment>